<dbReference type="EMBL" id="AC244472">
    <property type="status" value="NOT_ANNOTATED_CDS"/>
    <property type="molecule type" value="Genomic_DNA"/>
</dbReference>
<dbReference type="SMR" id="A0A087WV62"/>
<dbReference type="FunCoup" id="A0A087WV62">
    <property type="interactions" value="336"/>
</dbReference>
<dbReference type="IMGT_GENE-DB" id="TRBV16"/>
<dbReference type="BioMuta" id="ENSG00000275243"/>
<dbReference type="jPOST" id="A0A087WV62"/>
<dbReference type="Ensembl" id="ENST00000620773.1">
    <property type="protein sequence ID" value="ENSP00000479210.1"/>
    <property type="gene ID" value="ENSG00000275243.1"/>
</dbReference>
<dbReference type="Ensembl" id="ENST00000633244.1">
    <property type="protein sequence ID" value="ENSP00000487913.1"/>
    <property type="gene ID" value="ENSG00000282415.1"/>
</dbReference>
<dbReference type="UCSC" id="uc064isr.1">
    <property type="organism name" value="human"/>
</dbReference>
<dbReference type="AGR" id="HGNC:12191"/>
<dbReference type="GeneCards" id="TRBV16"/>
<dbReference type="HGNC" id="HGNC:12191">
    <property type="gene designation" value="TRBV16"/>
</dbReference>
<dbReference type="HPA" id="ENSG00000275243">
    <property type="expression patterns" value="Tissue enhanced (lymphoid)"/>
</dbReference>
<dbReference type="neXtProt" id="NX_A0A087WV62"/>
<dbReference type="VEuPathDB" id="HostDB:ENSG00000275243"/>
<dbReference type="GeneTree" id="ENSGT00940000155819"/>
<dbReference type="HOGENOM" id="CLU_077975_9_4_1"/>
<dbReference type="InParanoid" id="A0A087WV62"/>
<dbReference type="OMA" id="CAPIKGY"/>
<dbReference type="OrthoDB" id="9803478at2759"/>
<dbReference type="PAN-GO" id="A0A087WV62">
    <property type="GO annotations" value="2 GO annotations based on evolutionary models"/>
</dbReference>
<dbReference type="ChiTaRS" id="TRBV16">
    <property type="organism name" value="human"/>
</dbReference>
<dbReference type="Pharos" id="A0A087WV62">
    <property type="development level" value="Tdark"/>
</dbReference>
<dbReference type="PRO" id="PR:A0A087WV62"/>
<dbReference type="Proteomes" id="UP000005640">
    <property type="component" value="Chromosome 7"/>
</dbReference>
<dbReference type="RNAct" id="A0A087WV62">
    <property type="molecule type" value="protein"/>
</dbReference>
<dbReference type="Bgee" id="ENSG00000275243">
    <property type="expression patterns" value="Expressed in male germ line stem cell (sensu Vertebrata) in testis and 33 other cell types or tissues"/>
</dbReference>
<dbReference type="GO" id="GO:0005886">
    <property type="term" value="C:plasma membrane"/>
    <property type="evidence" value="ECO:0000318"/>
    <property type="project" value="GO_Central"/>
</dbReference>
<dbReference type="GO" id="GO:0042101">
    <property type="term" value="C:T cell receptor complex"/>
    <property type="evidence" value="ECO:0007669"/>
    <property type="project" value="UniProtKB-KW"/>
</dbReference>
<dbReference type="GO" id="GO:0002250">
    <property type="term" value="P:adaptive immune response"/>
    <property type="evidence" value="ECO:0007669"/>
    <property type="project" value="UniProtKB-KW"/>
</dbReference>
<dbReference type="GO" id="GO:0007166">
    <property type="term" value="P:cell surface receptor signaling pathway"/>
    <property type="evidence" value="ECO:0000318"/>
    <property type="project" value="GO_Central"/>
</dbReference>
<dbReference type="Gene3D" id="2.60.40.10">
    <property type="entry name" value="Immunoglobulins"/>
    <property type="match status" value="1"/>
</dbReference>
<dbReference type="InterPro" id="IPR007110">
    <property type="entry name" value="Ig-like_dom"/>
</dbReference>
<dbReference type="InterPro" id="IPR036179">
    <property type="entry name" value="Ig-like_dom_sf"/>
</dbReference>
<dbReference type="InterPro" id="IPR013783">
    <property type="entry name" value="Ig-like_fold"/>
</dbReference>
<dbReference type="InterPro" id="IPR013106">
    <property type="entry name" value="Ig_V-set"/>
</dbReference>
<dbReference type="InterPro" id="IPR050413">
    <property type="entry name" value="TCR_beta_variable"/>
</dbReference>
<dbReference type="PANTHER" id="PTHR23268:SF24">
    <property type="entry name" value="T CELL RECEPTOR BETA VARIABLE 16"/>
    <property type="match status" value="1"/>
</dbReference>
<dbReference type="PANTHER" id="PTHR23268">
    <property type="entry name" value="T-CELL RECEPTOR BETA CHAIN"/>
    <property type="match status" value="1"/>
</dbReference>
<dbReference type="Pfam" id="PF07686">
    <property type="entry name" value="V-set"/>
    <property type="match status" value="1"/>
</dbReference>
<dbReference type="SUPFAM" id="SSF48726">
    <property type="entry name" value="Immunoglobulin"/>
    <property type="match status" value="1"/>
</dbReference>
<dbReference type="PROSITE" id="PS50835">
    <property type="entry name" value="IG_LIKE"/>
    <property type="match status" value="1"/>
</dbReference>
<reference key="1">
    <citation type="journal article" date="2003" name="Nature">
        <title>The DNA sequence of human chromosome 7.</title>
        <authorList>
            <person name="Hillier L.W."/>
            <person name="Fulton R.S."/>
            <person name="Fulton L.A."/>
            <person name="Graves T.A."/>
            <person name="Pepin K.H."/>
            <person name="Wagner-McPherson C."/>
            <person name="Layman D."/>
            <person name="Maas J."/>
            <person name="Jaeger S."/>
            <person name="Walker R."/>
            <person name="Wylie K."/>
            <person name="Sekhon M."/>
            <person name="Becker M.C."/>
            <person name="O'Laughlin M.D."/>
            <person name="Schaller M.E."/>
            <person name="Fewell G.A."/>
            <person name="Delehaunty K.D."/>
            <person name="Miner T.L."/>
            <person name="Nash W.E."/>
            <person name="Cordes M."/>
            <person name="Du H."/>
            <person name="Sun H."/>
            <person name="Edwards J."/>
            <person name="Bradshaw-Cordum H."/>
            <person name="Ali J."/>
            <person name="Andrews S."/>
            <person name="Isak A."/>
            <person name="Vanbrunt A."/>
            <person name="Nguyen C."/>
            <person name="Du F."/>
            <person name="Lamar B."/>
            <person name="Courtney L."/>
            <person name="Kalicki J."/>
            <person name="Ozersky P."/>
            <person name="Bielicki L."/>
            <person name="Scott K."/>
            <person name="Holmes A."/>
            <person name="Harkins R."/>
            <person name="Harris A."/>
            <person name="Strong C.M."/>
            <person name="Hou S."/>
            <person name="Tomlinson C."/>
            <person name="Dauphin-Kohlberg S."/>
            <person name="Kozlowicz-Reilly A."/>
            <person name="Leonard S."/>
            <person name="Rohlfing T."/>
            <person name="Rock S.M."/>
            <person name="Tin-Wollam A.-M."/>
            <person name="Abbott A."/>
            <person name="Minx P."/>
            <person name="Maupin R."/>
            <person name="Strowmatt C."/>
            <person name="Latreille P."/>
            <person name="Miller N."/>
            <person name="Johnson D."/>
            <person name="Murray J."/>
            <person name="Woessner J.P."/>
            <person name="Wendl M.C."/>
            <person name="Yang S.-P."/>
            <person name="Schultz B.R."/>
            <person name="Wallis J.W."/>
            <person name="Spieth J."/>
            <person name="Bieri T.A."/>
            <person name="Nelson J.O."/>
            <person name="Berkowicz N."/>
            <person name="Wohldmann P.E."/>
            <person name="Cook L.L."/>
            <person name="Hickenbotham M.T."/>
            <person name="Eldred J."/>
            <person name="Williams D."/>
            <person name="Bedell J.A."/>
            <person name="Mardis E.R."/>
            <person name="Clifton S.W."/>
            <person name="Chissoe S.L."/>
            <person name="Marra M.A."/>
            <person name="Raymond C."/>
            <person name="Haugen E."/>
            <person name="Gillett W."/>
            <person name="Zhou Y."/>
            <person name="James R."/>
            <person name="Phelps K."/>
            <person name="Iadanoto S."/>
            <person name="Bubb K."/>
            <person name="Simms E."/>
            <person name="Levy R."/>
            <person name="Clendenning J."/>
            <person name="Kaul R."/>
            <person name="Kent W.J."/>
            <person name="Furey T.S."/>
            <person name="Baertsch R.A."/>
            <person name="Brent M.R."/>
            <person name="Keibler E."/>
            <person name="Flicek P."/>
            <person name="Bork P."/>
            <person name="Suyama M."/>
            <person name="Bailey J.A."/>
            <person name="Portnoy M.E."/>
            <person name="Torrents D."/>
            <person name="Chinwalla A.T."/>
            <person name="Gish W.R."/>
            <person name="Eddy S.R."/>
            <person name="McPherson J.D."/>
            <person name="Olson M.V."/>
            <person name="Eichler E.E."/>
            <person name="Green E.D."/>
            <person name="Waterston R.H."/>
            <person name="Wilson R.K."/>
        </authorList>
    </citation>
    <scope>NUCLEOTIDE SEQUENCE [LARGE SCALE GENOMIC DNA] (IMGT ALLELE TRBV16*01)</scope>
</reference>
<reference key="2">
    <citation type="book" date="2001" name="The T Cell Receptor FactsBook.">
        <title>The T Cell Receptor FactsBook.</title>
        <editorList>
            <person name="Lefranc M.P."/>
            <person name="Lefranc G."/>
        </editorList>
        <authorList>
            <person name="Lefranc M.P."/>
            <person name="Lefranc G."/>
        </authorList>
    </citation>
    <scope>NOMENCLATURE</scope>
</reference>
<reference key="3">
    <citation type="journal article" date="2004" name="Nat. Rev. Immunol.">
        <title>The many important facets of T-cell repertoire diversity.</title>
        <authorList>
            <person name="Nikolich-Zugich J."/>
            <person name="Slifka M.K."/>
            <person name="Messaoudi I."/>
        </authorList>
    </citation>
    <scope>REVIEW ON T CELL REPERTOIRE DIVERSITY</scope>
</reference>
<reference key="4">
    <citation type="journal article" date="2010" name="Cold Spring Harb. Perspect. Biol.">
        <title>Structural biology of the T-cell receptor: insights into receptor assembly, ligand recognition, and initiation of signaling.</title>
        <authorList>
            <person name="Wucherpfennig K.W."/>
            <person name="Gagnon E."/>
            <person name="Call M.J."/>
            <person name="Huseby E.S."/>
            <person name="Call M.E."/>
        </authorList>
    </citation>
    <scope>REVIEW ON T CELL RECEPTOR-CD3 COMPLEX ASSEMBLY</scope>
    <scope>SUBCELLULAR LOCATION</scope>
</reference>
<reference key="5">
    <citation type="journal article" date="2013" name="Nat. Rev. Immunol.">
        <title>T cell receptor signalling networks: branched, diversified and bounded.</title>
        <authorList>
            <person name="Brownlie R.J."/>
            <person name="Zamoyska R."/>
        </authorList>
    </citation>
    <scope>REVIEW ON T CELL RECEPTOR SIGNALING</scope>
</reference>
<reference key="6">
    <citation type="journal article" date="2014" name="Front. Immunol.">
        <title>Immunoglobulin and T Cell Receptor Genes: IMGT((R)) and the Birth and Rise of Immunoinformatics.</title>
        <authorList>
            <person name="Lefranc M.P."/>
        </authorList>
    </citation>
    <scope>NOMENCLATURE</scope>
</reference>
<reference key="7">
    <citation type="journal article" date="2015" name="Annu. Rev. Immunol.">
        <title>T cell antigen receptor recognition of antigen-presenting molecules.</title>
        <authorList>
            <person name="Rossjohn J."/>
            <person name="Gras S."/>
            <person name="Miles J.J."/>
            <person name="Turner S.J."/>
            <person name="Godfrey D.I."/>
            <person name="McCluskey J."/>
        </authorList>
    </citation>
    <scope>REVIEW ON FUNCTION</scope>
</reference>
<gene>
    <name evidence="8" type="primary">TRBV16</name>
</gene>
<organism>
    <name type="scientific">Homo sapiens</name>
    <name type="common">Human</name>
    <dbReference type="NCBI Taxonomy" id="9606"/>
    <lineage>
        <taxon>Eukaryota</taxon>
        <taxon>Metazoa</taxon>
        <taxon>Chordata</taxon>
        <taxon>Craniata</taxon>
        <taxon>Vertebrata</taxon>
        <taxon>Euteleostomi</taxon>
        <taxon>Mammalia</taxon>
        <taxon>Eutheria</taxon>
        <taxon>Euarchontoglires</taxon>
        <taxon>Primates</taxon>
        <taxon>Haplorrhini</taxon>
        <taxon>Catarrhini</taxon>
        <taxon>Hominidae</taxon>
        <taxon>Homo</taxon>
    </lineage>
</organism>
<sequence length="115" mass="12845">MSPIFTCITILCLLAAGSPGEEVAQTPKHLVRGEGQKAKLYCAPIKGHSYVFWYQQVLKNEFKFLISFQNENVFDETGMPKERFSAKCLPNSPCSLEIQATKLEDSAVYFCASSQ</sequence>
<protein>
    <recommendedName>
        <fullName evidence="8">T cell receptor beta variable 16</fullName>
    </recommendedName>
</protein>
<evidence type="ECO:0000255" key="1"/>
<evidence type="ECO:0000255" key="2">
    <source>
        <dbReference type="PROSITE-ProRule" id="PRU00114"/>
    </source>
</evidence>
<evidence type="ECO:0000303" key="3">
    <source>
    </source>
</evidence>
<evidence type="ECO:0000303" key="4">
    <source>
    </source>
</evidence>
<evidence type="ECO:0000303" key="5">
    <source>
    </source>
</evidence>
<evidence type="ECO:0000303" key="6">
    <source>
    </source>
</evidence>
<evidence type="ECO:0000303" key="7">
    <source>
    </source>
</evidence>
<evidence type="ECO:0000303" key="8">
    <source ref="2"/>
</evidence>
<evidence type="ECO:0000305" key="9"/>
<name>TVB16_HUMAN</name>
<feature type="signal peptide" evidence="1">
    <location>
        <begin position="1"/>
        <end position="20"/>
    </location>
</feature>
<feature type="chain" id="PRO_5014013288" description="T cell receptor beta variable 16" evidence="1">
    <location>
        <begin position="21"/>
        <end position="115"/>
    </location>
</feature>
<feature type="domain" description="Ig-like" evidence="2">
    <location>
        <begin position="21"/>
        <end position="115" status="greater than"/>
    </location>
</feature>
<feature type="disulfide bond" evidence="2">
    <location>
        <begin position="42"/>
        <end position="111"/>
    </location>
</feature>
<feature type="non-terminal residue">
    <location>
        <position position="115"/>
    </location>
</feature>
<keyword id="KW-1064">Adaptive immunity</keyword>
<keyword id="KW-1003">Cell membrane</keyword>
<keyword id="KW-1015">Disulfide bond</keyword>
<keyword id="KW-0391">Immunity</keyword>
<keyword id="KW-0393">Immunoglobulin domain</keyword>
<keyword id="KW-0472">Membrane</keyword>
<keyword id="KW-0675">Receptor</keyword>
<keyword id="KW-1185">Reference proteome</keyword>
<keyword id="KW-0732">Signal</keyword>
<keyword id="KW-1279">T cell receptor</keyword>
<proteinExistence type="inferred from homology"/>
<comment type="function">
    <text evidence="3 5 6 7">V region of the variable domain of T cell receptor (TR) beta chain that participates in the antigen recognition (PubMed:24600447). Alpha-beta T cell receptors are antigen specific receptors which are essential to the immune response and are present on the cell surface of T lymphocytes. Recognize peptide-major histocompatibility (MH) (pMH) complexes that are displayed by antigen presenting cells (APC), a prerequisite for efficient T cell adaptive immunity against pathogens (PubMed:25493333). Binding of alpha-beta TR to pMH complex initiates TR-CD3 clustering on the cell surface and intracellular activation of LCK that phosphorylates the ITAM motifs of CD3G, CD3D, CD3E and CD247 enabling the recruitment of ZAP70. In turn ZAP70 phosphorylates LAT, which recruits numerous signaling molecules to form the LAT signalosome. The LAT signalosome propagates signal branching to three major signaling pathways, the calcium, the mitogen-activated protein kinase (MAPK) kinase and the nuclear factor NF-kappa-B (NF-kB) pathways, leading to the mobilization of transcription factors that are critical for gene expression and essential for T cell growth and differentiation (PubMed:23524462). The T cell repertoire is generated in the thymus, by V-(D)-J rearrangement. This repertoire is then shaped by intrathymic selection events to generate a peripheral T cell pool of self-MH restricted, non-autoaggressive T cells. Post-thymic interaction of alpha-beta TR with the pMH complexes shapes TR structural and functional avidity (PubMed:15040585).</text>
</comment>
<comment type="subunit">
    <text evidence="4">Alpha-beta TR is a heterodimer composed of an alpha and beta chain; disulfide-linked. The alpha-beta TR is associated with the transmembrane signaling CD3 coreceptor proteins to form the TR-CD3 (TcR or TCR). The assembly of alpha-beta TR heterodimers with CD3 occurs in the endoplasmic reticulum where a single alpha-beta TR heterodimer associates with one CD3D-CD3E heterodimer, one CD3G-CD3E heterodimer and one CD247 homodimer forming a stable octameric structure. CD3D-CD3E and CD3G-CD3E heterodimers preferentially associate with TR alpha and TR beta chains, respectively. The association of the CD247 homodimer is the last step of TcR assembly in the endoplasmic reticulum and is required for transport to the cell surface.</text>
</comment>
<comment type="subcellular location">
    <subcellularLocation>
        <location evidence="4">Cell membrane</location>
    </subcellularLocation>
</comment>
<comment type="polymorphism">
    <text evidence="9">There are several alleles. The sequence shown is that of IMGT allele TRBV16*01.</text>
</comment>
<accession>A0A087WV62</accession>